<proteinExistence type="inferred from homology"/>
<evidence type="ECO:0000255" key="1">
    <source>
        <dbReference type="HAMAP-Rule" id="MF_00368"/>
    </source>
</evidence>
<evidence type="ECO:0000305" key="2"/>
<reference key="1">
    <citation type="journal article" date="2006" name="Proc. Natl. Acad. Sci. U.S.A.">
        <title>Identification of genes subject to positive selection in uropathogenic strains of Escherichia coli: a comparative genomics approach.</title>
        <authorList>
            <person name="Chen S.L."/>
            <person name="Hung C.-S."/>
            <person name="Xu J."/>
            <person name="Reigstad C.S."/>
            <person name="Magrini V."/>
            <person name="Sabo A."/>
            <person name="Blasiar D."/>
            <person name="Bieri T."/>
            <person name="Meyer R.R."/>
            <person name="Ozersky P."/>
            <person name="Armstrong J.R."/>
            <person name="Fulton R.S."/>
            <person name="Latreille J.P."/>
            <person name="Spieth J."/>
            <person name="Hooton T.M."/>
            <person name="Mardis E.R."/>
            <person name="Hultgren S.J."/>
            <person name="Gordon J.I."/>
        </authorList>
    </citation>
    <scope>NUCLEOTIDE SEQUENCE [LARGE SCALE GENOMIC DNA]</scope>
    <source>
        <strain>UTI89 / UPEC</strain>
    </source>
</reference>
<protein>
    <recommendedName>
        <fullName evidence="1">Large ribosomal subunit protein bL12</fullName>
    </recommendedName>
    <alternativeName>
        <fullName evidence="2">50S ribosomal protein L7/L12</fullName>
    </alternativeName>
</protein>
<sequence length="121" mass="12295">MSITKDQIIEAVAAMSVMDVVELISAMEEKFGVSAAAAVAVAAGPVEAAEEKTEFDVILKAAGANKVAVIKAVRGATGLGLKEAKDLVESAPAALKEGVSKDDAEALKKALEEAGAEVEVK</sequence>
<gene>
    <name evidence="1" type="primary">rplL</name>
    <name type="ordered locus">UTI89_C3834</name>
</gene>
<dbReference type="EMBL" id="CP000243">
    <property type="protein sequence ID" value="ABE09263.1"/>
    <property type="molecule type" value="Genomic_DNA"/>
</dbReference>
<dbReference type="RefSeq" id="WP_000028878.1">
    <property type="nucleotide sequence ID" value="NZ_CP064825.1"/>
</dbReference>
<dbReference type="SMR" id="Q1R5V1"/>
<dbReference type="GeneID" id="86944525"/>
<dbReference type="KEGG" id="eci:UTI89_C3834"/>
<dbReference type="HOGENOM" id="CLU_086499_3_2_6"/>
<dbReference type="Proteomes" id="UP000001952">
    <property type="component" value="Chromosome"/>
</dbReference>
<dbReference type="GO" id="GO:0022625">
    <property type="term" value="C:cytosolic large ribosomal subunit"/>
    <property type="evidence" value="ECO:0007669"/>
    <property type="project" value="TreeGrafter"/>
</dbReference>
<dbReference type="GO" id="GO:0003729">
    <property type="term" value="F:mRNA binding"/>
    <property type="evidence" value="ECO:0007669"/>
    <property type="project" value="TreeGrafter"/>
</dbReference>
<dbReference type="GO" id="GO:0003735">
    <property type="term" value="F:structural constituent of ribosome"/>
    <property type="evidence" value="ECO:0007669"/>
    <property type="project" value="InterPro"/>
</dbReference>
<dbReference type="GO" id="GO:0006412">
    <property type="term" value="P:translation"/>
    <property type="evidence" value="ECO:0007669"/>
    <property type="project" value="UniProtKB-UniRule"/>
</dbReference>
<dbReference type="CDD" id="cd00387">
    <property type="entry name" value="Ribosomal_L7_L12"/>
    <property type="match status" value="1"/>
</dbReference>
<dbReference type="FunFam" id="1.20.5.710:FF:000001">
    <property type="entry name" value="50S ribosomal protein L7/L12"/>
    <property type="match status" value="1"/>
</dbReference>
<dbReference type="FunFam" id="3.30.1390.10:FF:000001">
    <property type="entry name" value="50S ribosomal protein L7/L12"/>
    <property type="match status" value="1"/>
</dbReference>
<dbReference type="Gene3D" id="3.30.1390.10">
    <property type="match status" value="1"/>
</dbReference>
<dbReference type="Gene3D" id="1.20.5.710">
    <property type="entry name" value="Single helix bin"/>
    <property type="match status" value="1"/>
</dbReference>
<dbReference type="HAMAP" id="MF_00368">
    <property type="entry name" value="Ribosomal_bL12"/>
    <property type="match status" value="1"/>
</dbReference>
<dbReference type="InterPro" id="IPR000206">
    <property type="entry name" value="Ribosomal_bL12"/>
</dbReference>
<dbReference type="InterPro" id="IPR013823">
    <property type="entry name" value="Ribosomal_bL12_C"/>
</dbReference>
<dbReference type="InterPro" id="IPR014719">
    <property type="entry name" value="Ribosomal_bL12_C/ClpS-like"/>
</dbReference>
<dbReference type="InterPro" id="IPR008932">
    <property type="entry name" value="Ribosomal_bL12_oligo"/>
</dbReference>
<dbReference type="InterPro" id="IPR036235">
    <property type="entry name" value="Ribosomal_bL12_oligo_N_sf"/>
</dbReference>
<dbReference type="NCBIfam" id="TIGR00855">
    <property type="entry name" value="L12"/>
    <property type="match status" value="1"/>
</dbReference>
<dbReference type="PANTHER" id="PTHR45987">
    <property type="entry name" value="39S RIBOSOMAL PROTEIN L12"/>
    <property type="match status" value="1"/>
</dbReference>
<dbReference type="PANTHER" id="PTHR45987:SF4">
    <property type="entry name" value="LARGE RIBOSOMAL SUBUNIT PROTEIN BL12M"/>
    <property type="match status" value="1"/>
</dbReference>
<dbReference type="Pfam" id="PF00542">
    <property type="entry name" value="Ribosomal_L12"/>
    <property type="match status" value="1"/>
</dbReference>
<dbReference type="Pfam" id="PF16320">
    <property type="entry name" value="Ribosomal_L12_N"/>
    <property type="match status" value="1"/>
</dbReference>
<dbReference type="SUPFAM" id="SSF54736">
    <property type="entry name" value="ClpS-like"/>
    <property type="match status" value="1"/>
</dbReference>
<dbReference type="SUPFAM" id="SSF48300">
    <property type="entry name" value="Ribosomal protein L7/12, oligomerisation (N-terminal) domain"/>
    <property type="match status" value="1"/>
</dbReference>
<organism>
    <name type="scientific">Escherichia coli (strain UTI89 / UPEC)</name>
    <dbReference type="NCBI Taxonomy" id="364106"/>
    <lineage>
        <taxon>Bacteria</taxon>
        <taxon>Pseudomonadati</taxon>
        <taxon>Pseudomonadota</taxon>
        <taxon>Gammaproteobacteria</taxon>
        <taxon>Enterobacterales</taxon>
        <taxon>Enterobacteriaceae</taxon>
        <taxon>Escherichia</taxon>
    </lineage>
</organism>
<comment type="function">
    <text evidence="1">Forms part of the ribosomal stalk which helps the ribosome interact with GTP-bound translation factors. Is thus essential for accurate translation.</text>
</comment>
<comment type="subunit">
    <text evidence="1">Homodimer. Part of the ribosomal stalk of the 50S ribosomal subunit. Forms a multimeric L10(L12)X complex, where L10 forms an elongated spine to which 2 to 4 L12 dimers bind in a sequential fashion. Binds GTP-bound translation factors.</text>
</comment>
<comment type="similarity">
    <text evidence="1">Belongs to the bacterial ribosomal protein bL12 family.</text>
</comment>
<accession>Q1R5V1</accession>
<name>RL7_ECOUT</name>
<feature type="chain" id="PRO_1000007002" description="Large ribosomal subunit protein bL12">
    <location>
        <begin position="1"/>
        <end position="121"/>
    </location>
</feature>
<keyword id="KW-0687">Ribonucleoprotein</keyword>
<keyword id="KW-0689">Ribosomal protein</keyword>